<protein>
    <recommendedName>
        <fullName evidence="1">Probable phosphatase CKO_02035</fullName>
        <ecNumber evidence="1">3.1.3.-</ecNumber>
    </recommendedName>
</protein>
<organism>
    <name type="scientific">Citrobacter koseri (strain ATCC BAA-895 / CDC 4225-83 / SGSC4696)</name>
    <dbReference type="NCBI Taxonomy" id="290338"/>
    <lineage>
        <taxon>Bacteria</taxon>
        <taxon>Pseudomonadati</taxon>
        <taxon>Pseudomonadota</taxon>
        <taxon>Gammaproteobacteria</taxon>
        <taxon>Enterobacterales</taxon>
        <taxon>Enterobacteriaceae</taxon>
        <taxon>Citrobacter</taxon>
    </lineage>
</organism>
<keyword id="KW-0378">Hydrolase</keyword>
<keyword id="KW-0479">Metal-binding</keyword>
<keyword id="KW-1185">Reference proteome</keyword>
<keyword id="KW-0862">Zinc</keyword>
<comment type="cofactor">
    <cofactor evidence="1">
        <name>Zn(2+)</name>
        <dbReference type="ChEBI" id="CHEBI:29105"/>
    </cofactor>
    <text evidence="1">Binds 3 Zn(2+) ions per subunit.</text>
</comment>
<comment type="subunit">
    <text evidence="1">Homotrimer.</text>
</comment>
<comment type="similarity">
    <text evidence="1">Belongs to the PHP family.</text>
</comment>
<dbReference type="EC" id="3.1.3.-" evidence="1"/>
<dbReference type="EMBL" id="CP000822">
    <property type="protein sequence ID" value="ABV13161.1"/>
    <property type="molecule type" value="Genomic_DNA"/>
</dbReference>
<dbReference type="RefSeq" id="WP_012132897.1">
    <property type="nucleotide sequence ID" value="NC_009792.1"/>
</dbReference>
<dbReference type="SMR" id="A8AI48"/>
<dbReference type="STRING" id="290338.CKO_02035"/>
<dbReference type="GeneID" id="45135997"/>
<dbReference type="KEGG" id="cko:CKO_02035"/>
<dbReference type="HOGENOM" id="CLU_061999_0_1_6"/>
<dbReference type="OrthoDB" id="9808747at2"/>
<dbReference type="Proteomes" id="UP000008148">
    <property type="component" value="Chromosome"/>
</dbReference>
<dbReference type="GO" id="GO:0005829">
    <property type="term" value="C:cytosol"/>
    <property type="evidence" value="ECO:0007669"/>
    <property type="project" value="TreeGrafter"/>
</dbReference>
<dbReference type="GO" id="GO:0016791">
    <property type="term" value="F:phosphatase activity"/>
    <property type="evidence" value="ECO:0007669"/>
    <property type="project" value="UniProtKB-UniRule"/>
</dbReference>
<dbReference type="GO" id="GO:0008270">
    <property type="term" value="F:zinc ion binding"/>
    <property type="evidence" value="ECO:0007669"/>
    <property type="project" value="UniProtKB-UniRule"/>
</dbReference>
<dbReference type="GO" id="GO:0071978">
    <property type="term" value="P:bacterial-type flagellum-dependent swarming motility"/>
    <property type="evidence" value="ECO:0007669"/>
    <property type="project" value="TreeGrafter"/>
</dbReference>
<dbReference type="CDD" id="cd07437">
    <property type="entry name" value="PHP_HisPPase_Ycdx_like"/>
    <property type="match status" value="1"/>
</dbReference>
<dbReference type="FunFam" id="3.20.20.140:FF:000008">
    <property type="entry name" value="Probable phosphatase YcdX"/>
    <property type="match status" value="1"/>
</dbReference>
<dbReference type="Gene3D" id="3.20.20.140">
    <property type="entry name" value="Metal-dependent hydrolases"/>
    <property type="match status" value="1"/>
</dbReference>
<dbReference type="HAMAP" id="MF_01561">
    <property type="entry name" value="YcdX_phosphat"/>
    <property type="match status" value="1"/>
</dbReference>
<dbReference type="InterPro" id="IPR023710">
    <property type="entry name" value="Phosphatase_YcdX_put"/>
</dbReference>
<dbReference type="InterPro" id="IPR004013">
    <property type="entry name" value="PHP_dom"/>
</dbReference>
<dbReference type="InterPro" id="IPR050243">
    <property type="entry name" value="PHP_phosphatase"/>
</dbReference>
<dbReference type="InterPro" id="IPR003141">
    <property type="entry name" value="Pol/His_phosphatase_N"/>
</dbReference>
<dbReference type="InterPro" id="IPR016195">
    <property type="entry name" value="Pol/histidinol_Pase-like"/>
</dbReference>
<dbReference type="NCBIfam" id="NF006702">
    <property type="entry name" value="PRK09248.1"/>
    <property type="match status" value="1"/>
</dbReference>
<dbReference type="PANTHER" id="PTHR36928">
    <property type="entry name" value="PHOSPHATASE YCDX-RELATED"/>
    <property type="match status" value="1"/>
</dbReference>
<dbReference type="PANTHER" id="PTHR36928:SF1">
    <property type="entry name" value="PHOSPHATASE YCDX-RELATED"/>
    <property type="match status" value="1"/>
</dbReference>
<dbReference type="Pfam" id="PF02811">
    <property type="entry name" value="PHP"/>
    <property type="match status" value="1"/>
</dbReference>
<dbReference type="SMART" id="SM00481">
    <property type="entry name" value="POLIIIAc"/>
    <property type="match status" value="1"/>
</dbReference>
<dbReference type="SUPFAM" id="SSF89550">
    <property type="entry name" value="PHP domain-like"/>
    <property type="match status" value="1"/>
</dbReference>
<accession>A8AI48</accession>
<evidence type="ECO:0000255" key="1">
    <source>
        <dbReference type="HAMAP-Rule" id="MF_01561"/>
    </source>
</evidence>
<sequence length="245" mass="26868">MYPVDLHMHTVASTHAYSTLHDYIAEAKRKGIKLFAITDHGPDMADAPHHWHFINMRIWPRLVDGVGILRGIEANIKNIDGEIDCTGPMLNSLDVIIAGFHEPVFAPHDKETNTQAMIAAMASGNVHIISHPGNPKYPVDITAIAQAAAKYQVALEINNSSFLHSRKGSEDNCRAVAAAVRDAGGWVALGSDSHTAFTLGEFAECRKILDEVDFPEERVLNVSPGRLLRFLESRGMAPIPEFAEL</sequence>
<feature type="chain" id="PRO_1000069011" description="Probable phosphatase CKO_02035">
    <location>
        <begin position="1"/>
        <end position="245"/>
    </location>
</feature>
<feature type="binding site" evidence="1">
    <location>
        <position position="7"/>
    </location>
    <ligand>
        <name>Zn(2+)</name>
        <dbReference type="ChEBI" id="CHEBI:29105"/>
        <label>1</label>
    </ligand>
</feature>
<feature type="binding site" evidence="1">
    <location>
        <position position="9"/>
    </location>
    <ligand>
        <name>Zn(2+)</name>
        <dbReference type="ChEBI" id="CHEBI:29105"/>
        <label>1</label>
    </ligand>
</feature>
<feature type="binding site" evidence="1">
    <location>
        <position position="15"/>
    </location>
    <ligand>
        <name>Zn(2+)</name>
        <dbReference type="ChEBI" id="CHEBI:29105"/>
        <label>2</label>
    </ligand>
</feature>
<feature type="binding site" evidence="1">
    <location>
        <position position="40"/>
    </location>
    <ligand>
        <name>Zn(2+)</name>
        <dbReference type="ChEBI" id="CHEBI:29105"/>
        <label>2</label>
    </ligand>
</feature>
<feature type="binding site" evidence="1">
    <location>
        <position position="73"/>
    </location>
    <ligand>
        <name>Zn(2+)</name>
        <dbReference type="ChEBI" id="CHEBI:29105"/>
        <label>1</label>
    </ligand>
</feature>
<feature type="binding site" evidence="1">
    <location>
        <position position="73"/>
    </location>
    <ligand>
        <name>Zn(2+)</name>
        <dbReference type="ChEBI" id="CHEBI:29105"/>
        <label>3</label>
    </ligand>
</feature>
<feature type="binding site" evidence="1">
    <location>
        <position position="101"/>
    </location>
    <ligand>
        <name>Zn(2+)</name>
        <dbReference type="ChEBI" id="CHEBI:29105"/>
        <label>3</label>
    </ligand>
</feature>
<feature type="binding site" evidence="1">
    <location>
        <position position="131"/>
    </location>
    <ligand>
        <name>Zn(2+)</name>
        <dbReference type="ChEBI" id="CHEBI:29105"/>
        <label>3</label>
    </ligand>
</feature>
<feature type="binding site" evidence="1">
    <location>
        <position position="192"/>
    </location>
    <ligand>
        <name>Zn(2+)</name>
        <dbReference type="ChEBI" id="CHEBI:29105"/>
        <label>1</label>
    </ligand>
</feature>
<feature type="binding site" evidence="1">
    <location>
        <position position="194"/>
    </location>
    <ligand>
        <name>Zn(2+)</name>
        <dbReference type="ChEBI" id="CHEBI:29105"/>
        <label>2</label>
    </ligand>
</feature>
<name>Y2035_CITK8</name>
<reference key="1">
    <citation type="submission" date="2007-08" db="EMBL/GenBank/DDBJ databases">
        <authorList>
            <consortium name="The Citrobacter koseri Genome Sequencing Project"/>
            <person name="McClelland M."/>
            <person name="Sanderson E.K."/>
            <person name="Porwollik S."/>
            <person name="Spieth J."/>
            <person name="Clifton W.S."/>
            <person name="Latreille P."/>
            <person name="Courtney L."/>
            <person name="Wang C."/>
            <person name="Pepin K."/>
            <person name="Bhonagiri V."/>
            <person name="Nash W."/>
            <person name="Johnson M."/>
            <person name="Thiruvilangam P."/>
            <person name="Wilson R."/>
        </authorList>
    </citation>
    <scope>NUCLEOTIDE SEQUENCE [LARGE SCALE GENOMIC DNA]</scope>
    <source>
        <strain>ATCC BAA-895 / CDC 4225-83 / SGSC4696</strain>
    </source>
</reference>
<proteinExistence type="inferred from homology"/>
<gene>
    <name type="ordered locus">CKO_02035</name>
</gene>